<comment type="function">
    <text evidence="1">Cell wall formation. Catalyzes the transfer of a GlcNAc subunit on undecaprenyl-pyrophosphoryl-MurNAc-pentapeptide (lipid intermediate I) to form undecaprenyl-pyrophosphoryl-MurNAc-(pentapeptide)GlcNAc (lipid intermediate II).</text>
</comment>
<comment type="catalytic activity">
    <reaction evidence="1">
        <text>di-trans,octa-cis-undecaprenyl diphospho-N-acetyl-alpha-D-muramoyl-L-alanyl-D-glutamyl-meso-2,6-diaminopimeloyl-D-alanyl-D-alanine + UDP-N-acetyl-alpha-D-glucosamine = di-trans,octa-cis-undecaprenyl diphospho-[N-acetyl-alpha-D-glucosaminyl-(1-&gt;4)]-N-acetyl-alpha-D-muramoyl-L-alanyl-D-glutamyl-meso-2,6-diaminopimeloyl-D-alanyl-D-alanine + UDP + H(+)</text>
        <dbReference type="Rhea" id="RHEA:31227"/>
        <dbReference type="ChEBI" id="CHEBI:15378"/>
        <dbReference type="ChEBI" id="CHEBI:57705"/>
        <dbReference type="ChEBI" id="CHEBI:58223"/>
        <dbReference type="ChEBI" id="CHEBI:61387"/>
        <dbReference type="ChEBI" id="CHEBI:61388"/>
        <dbReference type="EC" id="2.4.1.227"/>
    </reaction>
</comment>
<comment type="pathway">
    <text evidence="1">Cell wall biogenesis; peptidoglycan biosynthesis.</text>
</comment>
<comment type="subcellular location">
    <subcellularLocation>
        <location evidence="1">Cell inner membrane</location>
        <topology evidence="1">Peripheral membrane protein</topology>
        <orientation evidence="1">Cytoplasmic side</orientation>
    </subcellularLocation>
</comment>
<comment type="similarity">
    <text evidence="1">Belongs to the glycosyltransferase 28 family. MurG subfamily.</text>
</comment>
<comment type="sequence caution" evidence="2">
    <conflict type="erroneous initiation">
        <sequence resource="EMBL-CDS" id="AAP98865"/>
    </conflict>
</comment>
<organism>
    <name type="scientific">Chlamydia pneumoniae</name>
    <name type="common">Chlamydophila pneumoniae</name>
    <dbReference type="NCBI Taxonomy" id="83558"/>
    <lineage>
        <taxon>Bacteria</taxon>
        <taxon>Pseudomonadati</taxon>
        <taxon>Chlamydiota</taxon>
        <taxon>Chlamydiia</taxon>
        <taxon>Chlamydiales</taxon>
        <taxon>Chlamydiaceae</taxon>
        <taxon>Chlamydia/Chlamydophila group</taxon>
        <taxon>Chlamydia</taxon>
    </lineage>
</organism>
<accession>Q9Z702</accession>
<accession>Q9JQ27</accession>
<dbReference type="EC" id="2.4.1.227" evidence="1"/>
<dbReference type="EMBL" id="AE001363">
    <property type="protein sequence ID" value="AAD19042.1"/>
    <property type="molecule type" value="Genomic_DNA"/>
</dbReference>
<dbReference type="EMBL" id="AE002161">
    <property type="protein sequence ID" value="AAF38742.1"/>
    <property type="molecule type" value="Genomic_DNA"/>
</dbReference>
<dbReference type="EMBL" id="BA000008">
    <property type="protein sequence ID" value="BAA99112.1"/>
    <property type="molecule type" value="Genomic_DNA"/>
</dbReference>
<dbReference type="EMBL" id="AE009440">
    <property type="protein sequence ID" value="AAP98865.1"/>
    <property type="status" value="ALT_INIT"/>
    <property type="molecule type" value="Genomic_DNA"/>
</dbReference>
<dbReference type="PIR" id="C72022">
    <property type="entry name" value="C72022"/>
</dbReference>
<dbReference type="PIR" id="F86603">
    <property type="entry name" value="F86603"/>
</dbReference>
<dbReference type="RefSeq" id="NP_225099.1">
    <property type="nucleotide sequence ID" value="NC_000922.1"/>
</dbReference>
<dbReference type="RefSeq" id="WP_010883539.1">
    <property type="nucleotide sequence ID" value="NZ_LN847257.1"/>
</dbReference>
<dbReference type="SMR" id="Q9Z702"/>
<dbReference type="STRING" id="406984.CPK_ORF00316"/>
<dbReference type="GeneID" id="45050960"/>
<dbReference type="KEGG" id="cpa:CP_0962"/>
<dbReference type="KEGG" id="cpj:murG"/>
<dbReference type="KEGG" id="cpn:CPn_0904"/>
<dbReference type="KEGG" id="cpt:CpB0936"/>
<dbReference type="PATRIC" id="fig|115713.3.peg.985"/>
<dbReference type="eggNOG" id="COG0707">
    <property type="taxonomic scope" value="Bacteria"/>
</dbReference>
<dbReference type="HOGENOM" id="CLU_037404_0_1_0"/>
<dbReference type="OrthoDB" id="9808936at2"/>
<dbReference type="UniPathway" id="UPA00219"/>
<dbReference type="Proteomes" id="UP000000583">
    <property type="component" value="Chromosome"/>
</dbReference>
<dbReference type="Proteomes" id="UP000000801">
    <property type="component" value="Chromosome"/>
</dbReference>
<dbReference type="GO" id="GO:0005886">
    <property type="term" value="C:plasma membrane"/>
    <property type="evidence" value="ECO:0007669"/>
    <property type="project" value="UniProtKB-SubCell"/>
</dbReference>
<dbReference type="GO" id="GO:0051991">
    <property type="term" value="F:UDP-N-acetyl-D-glucosamine:N-acetylmuramoyl-L-alanyl-D-glutamyl-meso-2,6-diaminopimelyl-D-alanyl-D-alanine-diphosphoundecaprenol 4-beta-N-acetylglucosaminlytransferase activity"/>
    <property type="evidence" value="ECO:0007669"/>
    <property type="project" value="RHEA"/>
</dbReference>
<dbReference type="GO" id="GO:0050511">
    <property type="term" value="F:undecaprenyldiphospho-muramoylpentapeptide beta-N-acetylglucosaminyltransferase activity"/>
    <property type="evidence" value="ECO:0007669"/>
    <property type="project" value="UniProtKB-UniRule"/>
</dbReference>
<dbReference type="GO" id="GO:0005975">
    <property type="term" value="P:carbohydrate metabolic process"/>
    <property type="evidence" value="ECO:0007669"/>
    <property type="project" value="InterPro"/>
</dbReference>
<dbReference type="GO" id="GO:0051301">
    <property type="term" value="P:cell division"/>
    <property type="evidence" value="ECO:0007669"/>
    <property type="project" value="UniProtKB-KW"/>
</dbReference>
<dbReference type="GO" id="GO:0071555">
    <property type="term" value="P:cell wall organization"/>
    <property type="evidence" value="ECO:0007669"/>
    <property type="project" value="UniProtKB-KW"/>
</dbReference>
<dbReference type="GO" id="GO:0030259">
    <property type="term" value="P:lipid glycosylation"/>
    <property type="evidence" value="ECO:0007669"/>
    <property type="project" value="UniProtKB-UniRule"/>
</dbReference>
<dbReference type="GO" id="GO:0009252">
    <property type="term" value="P:peptidoglycan biosynthetic process"/>
    <property type="evidence" value="ECO:0007669"/>
    <property type="project" value="UniProtKB-UniRule"/>
</dbReference>
<dbReference type="GO" id="GO:0008360">
    <property type="term" value="P:regulation of cell shape"/>
    <property type="evidence" value="ECO:0007669"/>
    <property type="project" value="UniProtKB-KW"/>
</dbReference>
<dbReference type="CDD" id="cd03785">
    <property type="entry name" value="GT28_MurG"/>
    <property type="match status" value="1"/>
</dbReference>
<dbReference type="Gene3D" id="3.40.50.2000">
    <property type="entry name" value="Glycogen Phosphorylase B"/>
    <property type="match status" value="2"/>
</dbReference>
<dbReference type="HAMAP" id="MF_00033">
    <property type="entry name" value="MurG"/>
    <property type="match status" value="1"/>
</dbReference>
<dbReference type="InterPro" id="IPR006009">
    <property type="entry name" value="GlcNAc_MurG"/>
</dbReference>
<dbReference type="InterPro" id="IPR007235">
    <property type="entry name" value="Glyco_trans_28_C"/>
</dbReference>
<dbReference type="InterPro" id="IPR004276">
    <property type="entry name" value="GlycoTrans_28_N"/>
</dbReference>
<dbReference type="NCBIfam" id="TIGR01133">
    <property type="entry name" value="murG"/>
    <property type="match status" value="1"/>
</dbReference>
<dbReference type="PANTHER" id="PTHR21015:SF22">
    <property type="entry name" value="GLYCOSYLTRANSFERASE"/>
    <property type="match status" value="1"/>
</dbReference>
<dbReference type="PANTHER" id="PTHR21015">
    <property type="entry name" value="UDP-N-ACETYLGLUCOSAMINE--N-ACETYLMURAMYL-(PENTAPEPTIDE) PYROPHOSPHORYL-UNDECAPRENOL N-ACETYLGLUCOSAMINE TRANSFERASE 1"/>
    <property type="match status" value="1"/>
</dbReference>
<dbReference type="Pfam" id="PF04101">
    <property type="entry name" value="Glyco_tran_28_C"/>
    <property type="match status" value="1"/>
</dbReference>
<dbReference type="Pfam" id="PF03033">
    <property type="entry name" value="Glyco_transf_28"/>
    <property type="match status" value="1"/>
</dbReference>
<dbReference type="SUPFAM" id="SSF53756">
    <property type="entry name" value="UDP-Glycosyltransferase/glycogen phosphorylase"/>
    <property type="match status" value="1"/>
</dbReference>
<reference key="1">
    <citation type="journal article" date="1999" name="Nat. Genet.">
        <title>Comparative genomes of Chlamydia pneumoniae and C. trachomatis.</title>
        <authorList>
            <person name="Kalman S."/>
            <person name="Mitchell W.P."/>
            <person name="Marathe R."/>
            <person name="Lammel C.J."/>
            <person name="Fan J."/>
            <person name="Hyman R.W."/>
            <person name="Olinger L."/>
            <person name="Grimwood J."/>
            <person name="Davis R.W."/>
            <person name="Stephens R.S."/>
        </authorList>
    </citation>
    <scope>NUCLEOTIDE SEQUENCE [LARGE SCALE GENOMIC DNA]</scope>
    <source>
        <strain>CWL029</strain>
    </source>
</reference>
<reference key="2">
    <citation type="journal article" date="2000" name="Nucleic Acids Res.">
        <title>Genome sequences of Chlamydia trachomatis MoPn and Chlamydia pneumoniae AR39.</title>
        <authorList>
            <person name="Read T.D."/>
            <person name="Brunham R.C."/>
            <person name="Shen C."/>
            <person name="Gill S.R."/>
            <person name="Heidelberg J.F."/>
            <person name="White O."/>
            <person name="Hickey E.K."/>
            <person name="Peterson J.D."/>
            <person name="Utterback T.R."/>
            <person name="Berry K.J."/>
            <person name="Bass S."/>
            <person name="Linher K.D."/>
            <person name="Weidman J.F."/>
            <person name="Khouri H.M."/>
            <person name="Craven B."/>
            <person name="Bowman C."/>
            <person name="Dodson R.J."/>
            <person name="Gwinn M.L."/>
            <person name="Nelson W.C."/>
            <person name="DeBoy R.T."/>
            <person name="Kolonay J.F."/>
            <person name="McClarty G."/>
            <person name="Salzberg S.L."/>
            <person name="Eisen J.A."/>
            <person name="Fraser C.M."/>
        </authorList>
    </citation>
    <scope>NUCLEOTIDE SEQUENCE [LARGE SCALE GENOMIC DNA]</scope>
    <source>
        <strain>AR39</strain>
    </source>
</reference>
<reference key="3">
    <citation type="journal article" date="2000" name="Nucleic Acids Res.">
        <title>Comparison of whole genome sequences of Chlamydia pneumoniae J138 from Japan and CWL029 from USA.</title>
        <authorList>
            <person name="Shirai M."/>
            <person name="Hirakawa H."/>
            <person name="Kimoto M."/>
            <person name="Tabuchi M."/>
            <person name="Kishi F."/>
            <person name="Ouchi K."/>
            <person name="Shiba T."/>
            <person name="Ishii K."/>
            <person name="Hattori M."/>
            <person name="Kuhara S."/>
            <person name="Nakazawa T."/>
        </authorList>
    </citation>
    <scope>NUCLEOTIDE SEQUENCE [LARGE SCALE GENOMIC DNA]</scope>
    <source>
        <strain>J138</strain>
    </source>
</reference>
<reference key="4">
    <citation type="submission" date="2002-05" db="EMBL/GenBank/DDBJ databases">
        <title>The genome sequence of Chlamydia pneumoniae TW183 and comparison with other Chlamydia strains based on whole genome sequence analysis.</title>
        <authorList>
            <person name="Geng M.M."/>
            <person name="Schuhmacher A."/>
            <person name="Muehldorfer I."/>
            <person name="Bensch K.W."/>
            <person name="Schaefer K.P."/>
            <person name="Schneider S."/>
            <person name="Pohl T."/>
            <person name="Essig A."/>
            <person name="Marre R."/>
            <person name="Melchers K."/>
        </authorList>
    </citation>
    <scope>NUCLEOTIDE SEQUENCE [LARGE SCALE GENOMIC DNA]</scope>
    <source>
        <strain>TW-183</strain>
    </source>
</reference>
<proteinExistence type="inferred from homology"/>
<feature type="chain" id="PRO_0000109161" description="UDP-N-acetylglucosamine--N-acetylmuramyl-(pentapeptide) pyrophosphoryl-undecaprenol N-acetylglucosamine transferase">
    <location>
        <begin position="1"/>
        <end position="357"/>
    </location>
</feature>
<feature type="binding site" evidence="1">
    <location>
        <begin position="15"/>
        <end position="17"/>
    </location>
    <ligand>
        <name>UDP-N-acetyl-alpha-D-glucosamine</name>
        <dbReference type="ChEBI" id="CHEBI:57705"/>
    </ligand>
</feature>
<feature type="binding site" evidence="1">
    <location>
        <position position="125"/>
    </location>
    <ligand>
        <name>UDP-N-acetyl-alpha-D-glucosamine</name>
        <dbReference type="ChEBI" id="CHEBI:57705"/>
    </ligand>
</feature>
<feature type="binding site" evidence="1">
    <location>
        <position position="190"/>
    </location>
    <ligand>
        <name>UDP-N-acetyl-alpha-D-glucosamine</name>
        <dbReference type="ChEBI" id="CHEBI:57705"/>
    </ligand>
</feature>
<feature type="binding site" evidence="1">
    <location>
        <position position="290"/>
    </location>
    <ligand>
        <name>UDP-N-acetyl-alpha-D-glucosamine</name>
        <dbReference type="ChEBI" id="CHEBI:57705"/>
    </ligand>
</feature>
<keyword id="KW-0131">Cell cycle</keyword>
<keyword id="KW-0132">Cell division</keyword>
<keyword id="KW-0997">Cell inner membrane</keyword>
<keyword id="KW-1003">Cell membrane</keyword>
<keyword id="KW-0133">Cell shape</keyword>
<keyword id="KW-0961">Cell wall biogenesis/degradation</keyword>
<keyword id="KW-0328">Glycosyltransferase</keyword>
<keyword id="KW-0472">Membrane</keyword>
<keyword id="KW-0573">Peptidoglycan synthesis</keyword>
<keyword id="KW-0808">Transferase</keyword>
<name>MURG_CHLPN</name>
<gene>
    <name evidence="1" type="primary">murG</name>
    <name type="ordered locus">CPn_0904</name>
    <name type="ordered locus">CP_0962</name>
    <name type="ordered locus">CpB0936</name>
</gene>
<protein>
    <recommendedName>
        <fullName evidence="1">UDP-N-acetylglucosamine--N-acetylmuramyl-(pentapeptide) pyrophosphoryl-undecaprenol N-acetylglucosamine transferase</fullName>
        <ecNumber evidence="1">2.4.1.227</ecNumber>
    </recommendedName>
    <alternativeName>
        <fullName evidence="1">Undecaprenyl-PP-MurNAc-pentapeptide-UDPGlcNAc GlcNAc transferase</fullName>
    </alternativeName>
</protein>
<sequence length="357" mass="39420">MMKKIRKVALAVGGSGGHIVPALSVKEAFSREGIDVLLLGKGLKNHPSLQQGISYREIPSGLPTVLNPIKIMSRTLSLCSGYLKARKELKIFDPDLVIGFGSYHSLPVLLAGLSHKIPLFLHEQNLVPGKVNQLFSRYARGIGVNFSPVTKHFRCPAEEVFLPKRSFSLGSPMMKRCTNHTPTICVVGGSQGAQILNTCVPQALVKLVNKYPNMYVHHIVGPKSDVMKVQHVYNRGEVLCCVKPFEEQLLDVLLAADLVISRAGATILEEILWAKVPGILIPYPGAYGHQEVNAKFFVDVLEGGTMILEKELTEKLLVEKVTFALDSHNREKQRNSLAAYSQQRSTKTFHAFICECL</sequence>
<evidence type="ECO:0000255" key="1">
    <source>
        <dbReference type="HAMAP-Rule" id="MF_00033"/>
    </source>
</evidence>
<evidence type="ECO:0000305" key="2"/>